<proteinExistence type="inferred from homology"/>
<sequence length="341" mass="37211">MRRNSERPVRITEVCLRDGSHVMKHQFTEEQVRFVTRALDEAGMHYIEVSHGDGLGGSTLQYGKSLVNEMKLIEAAVDECKQAQIAVLLIPGIGTIHELKQAANIGAKLVRVATHVTEADVSAQHIQFARELGMEVCGFLMMAHSASVEKLVEQGKLMESYGAEAVYVTDSAGALLPHEVRERIRALRQSLNIEIGFHGHNNLSVAVANTITAIEEGATRIDGSVRCLGAGAGNAQTEVLLAVLDRMGYKLDIDLYKMMDVAEEVVAPLLPVPQEIQKGSLVMGYAGVYSSFLLHAERAAQRFNVDARDILIELGKRKVVGGQEDMILDVAAELAKIKMEV</sequence>
<evidence type="ECO:0000255" key="1">
    <source>
        <dbReference type="HAMAP-Rule" id="MF_01656"/>
    </source>
</evidence>
<accession>C1ERL7</accession>
<organism>
    <name type="scientific">Bacillus cereus (strain 03BB102)</name>
    <dbReference type="NCBI Taxonomy" id="572264"/>
    <lineage>
        <taxon>Bacteria</taxon>
        <taxon>Bacillati</taxon>
        <taxon>Bacillota</taxon>
        <taxon>Bacilli</taxon>
        <taxon>Bacillales</taxon>
        <taxon>Bacillaceae</taxon>
        <taxon>Bacillus</taxon>
        <taxon>Bacillus cereus group</taxon>
    </lineage>
</organism>
<dbReference type="EC" id="4.1.3.39" evidence="1"/>
<dbReference type="EMBL" id="CP001407">
    <property type="protein sequence ID" value="ACO27787.1"/>
    <property type="molecule type" value="Genomic_DNA"/>
</dbReference>
<dbReference type="RefSeq" id="WP_001254087.1">
    <property type="nucleotide sequence ID" value="NZ_CP009318.1"/>
</dbReference>
<dbReference type="SMR" id="C1ERL7"/>
<dbReference type="KEGG" id="bcx:BCA_2155"/>
<dbReference type="PATRIC" id="fig|572264.18.peg.2101"/>
<dbReference type="Proteomes" id="UP000002210">
    <property type="component" value="Chromosome"/>
</dbReference>
<dbReference type="GO" id="GO:0003852">
    <property type="term" value="F:2-isopropylmalate synthase activity"/>
    <property type="evidence" value="ECO:0007669"/>
    <property type="project" value="TreeGrafter"/>
</dbReference>
<dbReference type="GO" id="GO:0008701">
    <property type="term" value="F:4-hydroxy-2-oxovalerate aldolase activity"/>
    <property type="evidence" value="ECO:0007669"/>
    <property type="project" value="UniProtKB-UniRule"/>
</dbReference>
<dbReference type="GO" id="GO:0030145">
    <property type="term" value="F:manganese ion binding"/>
    <property type="evidence" value="ECO:0007669"/>
    <property type="project" value="UniProtKB-UniRule"/>
</dbReference>
<dbReference type="GO" id="GO:0009056">
    <property type="term" value="P:catabolic process"/>
    <property type="evidence" value="ECO:0007669"/>
    <property type="project" value="UniProtKB-KW"/>
</dbReference>
<dbReference type="GO" id="GO:0009098">
    <property type="term" value="P:L-leucine biosynthetic process"/>
    <property type="evidence" value="ECO:0007669"/>
    <property type="project" value="TreeGrafter"/>
</dbReference>
<dbReference type="CDD" id="cd07943">
    <property type="entry name" value="DRE_TIM_HOA"/>
    <property type="match status" value="1"/>
</dbReference>
<dbReference type="Gene3D" id="1.10.8.60">
    <property type="match status" value="1"/>
</dbReference>
<dbReference type="Gene3D" id="3.20.20.70">
    <property type="entry name" value="Aldolase class I"/>
    <property type="match status" value="1"/>
</dbReference>
<dbReference type="HAMAP" id="MF_01656">
    <property type="entry name" value="HOA"/>
    <property type="match status" value="1"/>
</dbReference>
<dbReference type="InterPro" id="IPR050073">
    <property type="entry name" value="2-IPM_HCS-like"/>
</dbReference>
<dbReference type="InterPro" id="IPR017629">
    <property type="entry name" value="4OH_2_O-val_aldolase"/>
</dbReference>
<dbReference type="InterPro" id="IPR013785">
    <property type="entry name" value="Aldolase_TIM"/>
</dbReference>
<dbReference type="InterPro" id="IPR012425">
    <property type="entry name" value="DmpG_comm"/>
</dbReference>
<dbReference type="InterPro" id="IPR035685">
    <property type="entry name" value="DRE_TIM_HOA"/>
</dbReference>
<dbReference type="InterPro" id="IPR000891">
    <property type="entry name" value="PYR_CT"/>
</dbReference>
<dbReference type="NCBIfam" id="TIGR03217">
    <property type="entry name" value="4OH_2_O_val_ald"/>
    <property type="match status" value="1"/>
</dbReference>
<dbReference type="NCBIfam" id="NF006049">
    <property type="entry name" value="PRK08195.1"/>
    <property type="match status" value="1"/>
</dbReference>
<dbReference type="PANTHER" id="PTHR10277:SF9">
    <property type="entry name" value="2-ISOPROPYLMALATE SYNTHASE 1, CHLOROPLASTIC-RELATED"/>
    <property type="match status" value="1"/>
</dbReference>
<dbReference type="PANTHER" id="PTHR10277">
    <property type="entry name" value="HOMOCITRATE SYNTHASE-RELATED"/>
    <property type="match status" value="1"/>
</dbReference>
<dbReference type="Pfam" id="PF07836">
    <property type="entry name" value="DmpG_comm"/>
    <property type="match status" value="1"/>
</dbReference>
<dbReference type="Pfam" id="PF00682">
    <property type="entry name" value="HMGL-like"/>
    <property type="match status" value="1"/>
</dbReference>
<dbReference type="SUPFAM" id="SSF51569">
    <property type="entry name" value="Aldolase"/>
    <property type="match status" value="1"/>
</dbReference>
<dbReference type="SUPFAM" id="SSF89000">
    <property type="entry name" value="post-HMGL domain-like"/>
    <property type="match status" value="1"/>
</dbReference>
<dbReference type="PROSITE" id="PS50991">
    <property type="entry name" value="PYR_CT"/>
    <property type="match status" value="1"/>
</dbReference>
<reference key="1">
    <citation type="submission" date="2009-02" db="EMBL/GenBank/DDBJ databases">
        <title>Genome sequence of Bacillus cereus 03BB102.</title>
        <authorList>
            <person name="Dodson R.J."/>
            <person name="Jackson P."/>
            <person name="Munk A.C."/>
            <person name="Brettin T."/>
            <person name="Bruce D."/>
            <person name="Detter C."/>
            <person name="Tapia R."/>
            <person name="Han C."/>
            <person name="Sutton G."/>
            <person name="Sims D."/>
        </authorList>
    </citation>
    <scope>NUCLEOTIDE SEQUENCE [LARGE SCALE GENOMIC DNA]</scope>
    <source>
        <strain>03BB102</strain>
    </source>
</reference>
<feature type="chain" id="PRO_0000387787" description="4-hydroxy-2-oxovalerate aldolase">
    <location>
        <begin position="1"/>
        <end position="341"/>
    </location>
</feature>
<feature type="domain" description="Pyruvate carboxyltransferase" evidence="1">
    <location>
        <begin position="9"/>
        <end position="259"/>
    </location>
</feature>
<feature type="active site" description="Proton acceptor" evidence="1">
    <location>
        <position position="21"/>
    </location>
</feature>
<feature type="binding site" evidence="1">
    <location>
        <begin position="17"/>
        <end position="18"/>
    </location>
    <ligand>
        <name>substrate</name>
    </ligand>
</feature>
<feature type="binding site" evidence="1">
    <location>
        <position position="18"/>
    </location>
    <ligand>
        <name>Mn(2+)</name>
        <dbReference type="ChEBI" id="CHEBI:29035"/>
    </ligand>
</feature>
<feature type="binding site" evidence="1">
    <location>
        <position position="171"/>
    </location>
    <ligand>
        <name>substrate</name>
    </ligand>
</feature>
<feature type="binding site" evidence="1">
    <location>
        <position position="198"/>
    </location>
    <ligand>
        <name>Mn(2+)</name>
        <dbReference type="ChEBI" id="CHEBI:29035"/>
    </ligand>
</feature>
<feature type="binding site" evidence="1">
    <location>
        <position position="198"/>
    </location>
    <ligand>
        <name>substrate</name>
    </ligand>
</feature>
<feature type="binding site" evidence="1">
    <location>
        <position position="200"/>
    </location>
    <ligand>
        <name>Mn(2+)</name>
        <dbReference type="ChEBI" id="CHEBI:29035"/>
    </ligand>
</feature>
<feature type="binding site" evidence="1">
    <location>
        <position position="289"/>
    </location>
    <ligand>
        <name>substrate</name>
    </ligand>
</feature>
<feature type="site" description="Transition state stabilizer" evidence="1">
    <location>
        <position position="17"/>
    </location>
</feature>
<keyword id="KW-0058">Aromatic hydrocarbons catabolism</keyword>
<keyword id="KW-0456">Lyase</keyword>
<keyword id="KW-0464">Manganese</keyword>
<keyword id="KW-0479">Metal-binding</keyword>
<name>HOA_BACC3</name>
<protein>
    <recommendedName>
        <fullName evidence="1">4-hydroxy-2-oxovalerate aldolase</fullName>
        <shortName evidence="1">HOA</shortName>
        <ecNumber evidence="1">4.1.3.39</ecNumber>
    </recommendedName>
    <alternativeName>
        <fullName evidence="1">4-hydroxy-2-keto-pentanoic acid aldolase</fullName>
    </alternativeName>
    <alternativeName>
        <fullName evidence="1">4-hydroxy-2-oxopentanoate aldolase</fullName>
    </alternativeName>
</protein>
<comment type="catalytic activity">
    <reaction evidence="1">
        <text>(S)-4-hydroxy-2-oxopentanoate = acetaldehyde + pyruvate</text>
        <dbReference type="Rhea" id="RHEA:22624"/>
        <dbReference type="ChEBI" id="CHEBI:15343"/>
        <dbReference type="ChEBI" id="CHEBI:15361"/>
        <dbReference type="ChEBI" id="CHEBI:73143"/>
        <dbReference type="EC" id="4.1.3.39"/>
    </reaction>
</comment>
<comment type="similarity">
    <text evidence="1">Belongs to the 4-hydroxy-2-oxovalerate aldolase family.</text>
</comment>
<gene>
    <name type="primary">dmpG</name>
    <name type="ordered locus">BCA_2155</name>
</gene>